<sequence length="619" mass="68148">MKFLGIAALVAGLLAPSLVLGAPAPGTEGVNLLTPVDKRQDSQAERYGGGGGGGCNSPTNRQCWSPGFNINTDYELGTPNTGKTRRYKLTLTETDNWIGPDGVIKDKVMMVNDKIIGPTIQADWGDYIEITVINKLKSNGTSIHWHGMHQRNSNIQDGVNGVTECPIPPRGGSKVYRWRATQYGTSWYHSHFSAQYGNGIVGPIVINGPASANYDVDLGPFPLTDYYYDTADRLVLLTQHAGPPPSNNVLFNGFAKHPTTGAGQYATVSLTKGKKHRLRLINTSVENHFQLSLVNHSMTIISADLVPVQPYKVDSLFLGVGQRYDVIIDANQAVGNYWFNVTFGGSKLCGDSDNHYPAAIFRYQGAPKALPTNQGVAPVDHQCLDLNDLKPVLQRSLNTNSIALNTGNTIPITLDGFVWRVNGTAININWNKPVLEYVLTGNTNYSQSDNIVQVEGVNQWKYWLIENDPDGAFSLPHPIHLHGHDFLILGRSPDVTAISQTRYVFDPAVDMARLNGNNPTRRDTAMLPAKGWLLIAFRTDNPGSWLMHCHIAWHVSGGLSNQFLERAQDLRNSISPADKKAFNDNCDAWRAYFPDNAPFPKDDSGLRSGVKAREVKMKW</sequence>
<evidence type="ECO:0000250" key="1">
    <source>
        <dbReference type="UniProtKB" id="D0VWU3"/>
    </source>
</evidence>
<evidence type="ECO:0000250" key="2">
    <source>
        <dbReference type="UniProtKB" id="Q70KY3"/>
    </source>
</evidence>
<evidence type="ECO:0000255" key="3"/>
<evidence type="ECO:0000305" key="4"/>
<name>LAC1_NEUCR</name>
<protein>
    <recommendedName>
        <fullName>Laccase</fullName>
        <ecNumber evidence="2">1.10.3.2</ecNumber>
    </recommendedName>
    <alternativeName>
        <fullName>Benzenediol:oxygen oxidoreductase</fullName>
    </alternativeName>
    <alternativeName>
        <fullName>Diphenol oxidase</fullName>
    </alternativeName>
    <alternativeName>
        <fullName>Urishiol oxidase</fullName>
    </alternativeName>
</protein>
<gene>
    <name type="primary">lacc</name>
    <name type="ORF">NCU04528</name>
</gene>
<keyword id="KW-0186">Copper</keyword>
<keyword id="KW-0903">Direct protein sequencing</keyword>
<keyword id="KW-1015">Disulfide bond</keyword>
<keyword id="KW-0325">Glycoprotein</keyword>
<keyword id="KW-0439">Lignin degradation</keyword>
<keyword id="KW-0479">Metal-binding</keyword>
<keyword id="KW-0560">Oxidoreductase</keyword>
<keyword id="KW-1185">Reference proteome</keyword>
<keyword id="KW-0677">Repeat</keyword>
<keyword id="KW-0964">Secreted</keyword>
<keyword id="KW-0732">Signal</keyword>
<reference key="1">
    <citation type="journal article" date="1988" name="J. Biol. Chem.">
        <title>Characterization of two allelic forms of Neurospora crassa laccase. Amino- and carboxyl-terminal processing of a precursor.</title>
        <authorList>
            <person name="Germann U.A."/>
            <person name="Mueller G."/>
            <person name="Hunziker P.E."/>
            <person name="Lerch K."/>
        </authorList>
    </citation>
    <scope>NUCLEOTIDE SEQUENCE [GENOMIC DNA]</scope>
    <scope>PARTIAL PROTEIN SEQUENCE</scope>
    <source>
        <strain>Oak Ridge</strain>
        <strain>TS</strain>
    </source>
</reference>
<reference key="2">
    <citation type="journal article" date="2003" name="Nature">
        <title>The genome sequence of the filamentous fungus Neurospora crassa.</title>
        <authorList>
            <person name="Galagan J.E."/>
            <person name="Calvo S.E."/>
            <person name="Borkovich K.A."/>
            <person name="Selker E.U."/>
            <person name="Read N.D."/>
            <person name="Jaffe D.B."/>
            <person name="FitzHugh W."/>
            <person name="Ma L.-J."/>
            <person name="Smirnov S."/>
            <person name="Purcell S."/>
            <person name="Rehman B."/>
            <person name="Elkins T."/>
            <person name="Engels R."/>
            <person name="Wang S."/>
            <person name="Nielsen C.B."/>
            <person name="Butler J."/>
            <person name="Endrizzi M."/>
            <person name="Qui D."/>
            <person name="Ianakiev P."/>
            <person name="Bell-Pedersen D."/>
            <person name="Nelson M.A."/>
            <person name="Werner-Washburne M."/>
            <person name="Selitrennikoff C.P."/>
            <person name="Kinsey J.A."/>
            <person name="Braun E.L."/>
            <person name="Zelter A."/>
            <person name="Schulte U."/>
            <person name="Kothe G.O."/>
            <person name="Jedd G."/>
            <person name="Mewes H.-W."/>
            <person name="Staben C."/>
            <person name="Marcotte E."/>
            <person name="Greenberg D."/>
            <person name="Roy A."/>
            <person name="Foley K."/>
            <person name="Naylor J."/>
            <person name="Stange-Thomann N."/>
            <person name="Barrett R."/>
            <person name="Gnerre S."/>
            <person name="Kamal M."/>
            <person name="Kamvysselis M."/>
            <person name="Mauceli E.W."/>
            <person name="Bielke C."/>
            <person name="Rudd S."/>
            <person name="Frishman D."/>
            <person name="Krystofova S."/>
            <person name="Rasmussen C."/>
            <person name="Metzenberg R.L."/>
            <person name="Perkins D.D."/>
            <person name="Kroken S."/>
            <person name="Cogoni C."/>
            <person name="Macino G."/>
            <person name="Catcheside D.E.A."/>
            <person name="Li W."/>
            <person name="Pratt R.J."/>
            <person name="Osmani S.A."/>
            <person name="DeSouza C.P.C."/>
            <person name="Glass N.L."/>
            <person name="Orbach M.J."/>
            <person name="Berglund J.A."/>
            <person name="Voelker R."/>
            <person name="Yarden O."/>
            <person name="Plamann M."/>
            <person name="Seiler S."/>
            <person name="Dunlap J.C."/>
            <person name="Radford A."/>
            <person name="Aramayo R."/>
            <person name="Natvig D.O."/>
            <person name="Alex L.A."/>
            <person name="Mannhaupt G."/>
            <person name="Ebbole D.J."/>
            <person name="Freitag M."/>
            <person name="Paulsen I."/>
            <person name="Sachs M.S."/>
            <person name="Lander E.S."/>
            <person name="Nusbaum C."/>
            <person name="Birren B.W."/>
        </authorList>
    </citation>
    <scope>NUCLEOTIDE SEQUENCE [LARGE SCALE GENOMIC DNA]</scope>
    <source>
        <strain>ATCC 24698 / 74-OR23-1A / CBS 708.71 / DSM 1257 / FGSC 987</strain>
    </source>
</reference>
<reference key="3">
    <citation type="journal article" date="1986" name="Proc. Natl. Acad. Sci. U.S.A.">
        <title>Isolation and partial nucleotide sequence of the laccase gene from Neurospora crassa: amino acid sequence homology of the protein to human ceruloplasmin.</title>
        <authorList>
            <person name="Germann U.A."/>
            <person name="Lerch K."/>
        </authorList>
    </citation>
    <scope>NUCLEOTIDE SEQUENCE [GENOMIC DNA] OF 379-619</scope>
</reference>
<feature type="signal peptide" evidence="3">
    <location>
        <begin position="1"/>
        <end position="21"/>
    </location>
</feature>
<feature type="propeptide" id="PRO_0000002921">
    <location>
        <begin position="22"/>
        <end position="49"/>
    </location>
</feature>
<feature type="chain" id="PRO_0000002922" description="Laccase">
    <location>
        <begin position="50"/>
        <end position="606"/>
    </location>
</feature>
<feature type="propeptide" id="PRO_0000002923">
    <location>
        <begin position="607"/>
        <end position="619"/>
    </location>
</feature>
<feature type="domain" description="Plastocyanin-like 1">
    <location>
        <begin position="84"/>
        <end position="207"/>
    </location>
</feature>
<feature type="domain" description="Plastocyanin-like 2">
    <location>
        <begin position="216"/>
        <end position="373"/>
    </location>
</feature>
<feature type="domain" description="Plastocyanin-like 3">
    <location>
        <begin position="431"/>
        <end position="566"/>
    </location>
</feature>
<feature type="binding site" description="type 2 copper site" evidence="1">
    <location>
        <position position="144"/>
    </location>
    <ligand>
        <name>Cu cation</name>
        <dbReference type="ChEBI" id="CHEBI:23378"/>
        <label>1</label>
    </ligand>
</feature>
<feature type="binding site" description="type 3 copper site" evidence="1">
    <location>
        <position position="146"/>
    </location>
    <ligand>
        <name>Cu cation</name>
        <dbReference type="ChEBI" id="CHEBI:23378"/>
        <label>2</label>
    </ligand>
</feature>
<feature type="binding site" description="type 3 copper site" evidence="1">
    <location>
        <position position="189"/>
    </location>
    <ligand>
        <name>Cu cation</name>
        <dbReference type="ChEBI" id="CHEBI:23378"/>
        <label>2</label>
    </ligand>
</feature>
<feature type="binding site" description="type 3 copper site" evidence="1">
    <location>
        <position position="191"/>
    </location>
    <ligand>
        <name>Cu cation</name>
        <dbReference type="ChEBI" id="CHEBI:23378"/>
        <label>3</label>
    </ligand>
</feature>
<feature type="binding site" description="type 1 copper site" evidence="1">
    <location>
        <position position="477"/>
    </location>
    <ligand>
        <name>Cu cation</name>
        <dbReference type="ChEBI" id="CHEBI:23378"/>
        <label>4</label>
    </ligand>
</feature>
<feature type="binding site" description="type 2 copper site" evidence="1">
    <location>
        <position position="480"/>
    </location>
    <ligand>
        <name>Cu cation</name>
        <dbReference type="ChEBI" id="CHEBI:23378"/>
        <label>1</label>
    </ligand>
</feature>
<feature type="binding site" description="type 3 copper site" evidence="1">
    <location>
        <position position="482"/>
    </location>
    <ligand>
        <name>Cu cation</name>
        <dbReference type="ChEBI" id="CHEBI:23378"/>
        <label>3</label>
    </ligand>
</feature>
<feature type="binding site" description="type 3 copper site" evidence="1">
    <location>
        <position position="548"/>
    </location>
    <ligand>
        <name>Cu cation</name>
        <dbReference type="ChEBI" id="CHEBI:23378"/>
        <label>3</label>
    </ligand>
</feature>
<feature type="binding site" description="type 1 copper site" evidence="1">
    <location>
        <position position="549"/>
    </location>
    <ligand>
        <name>Cu cation</name>
        <dbReference type="ChEBI" id="CHEBI:23378"/>
        <label>4</label>
    </ligand>
</feature>
<feature type="binding site" description="type 3 copper site" evidence="1">
    <location>
        <position position="550"/>
    </location>
    <ligand>
        <name>Cu cation</name>
        <dbReference type="ChEBI" id="CHEBI:23378"/>
        <label>2</label>
    </ligand>
</feature>
<feature type="binding site" description="type 1 copper site" evidence="1">
    <location>
        <position position="554"/>
    </location>
    <ligand>
        <name>Cu cation</name>
        <dbReference type="ChEBI" id="CHEBI:23378"/>
        <label>4</label>
    </ligand>
</feature>
<feature type="glycosylation site" description="N-linked (GlcNAc...) asparagine" evidence="3">
    <location>
        <position position="139"/>
    </location>
</feature>
<feature type="glycosylation site" description="N-linked (GlcNAc...) asparagine" evidence="3">
    <location>
        <position position="282"/>
    </location>
</feature>
<feature type="glycosylation site" description="N-linked (GlcNAc...) asparagine" evidence="3">
    <location>
        <position position="295"/>
    </location>
</feature>
<feature type="glycosylation site" description="N-linked (GlcNAc...) asparagine" evidence="3">
    <location>
        <position position="340"/>
    </location>
</feature>
<feature type="glycosylation site" description="N-linked (GlcNAc...) asparagine" evidence="3">
    <location>
        <position position="422"/>
    </location>
</feature>
<feature type="glycosylation site" description="N-linked (GlcNAc...) asparagine" evidence="3">
    <location>
        <position position="444"/>
    </location>
</feature>
<feature type="disulfide bond" evidence="2">
    <location>
        <begin position="55"/>
        <end position="63"/>
    </location>
</feature>
<feature type="disulfide bond" evidence="2">
    <location>
        <begin position="165"/>
        <end position="586"/>
    </location>
</feature>
<feature type="disulfide bond" evidence="2">
    <location>
        <begin position="349"/>
        <end position="383"/>
    </location>
</feature>
<feature type="sequence variant" description="In strain: Oak Ridge.">
    <original>S</original>
    <variation>P</variation>
    <location>
        <position position="17"/>
    </location>
</feature>
<feature type="sequence variant" description="In strain: Oak Ridge.">
    <original>G</original>
    <variation>A</variation>
    <location>
        <position position="21"/>
    </location>
</feature>
<feature type="sequence variant" description="In strain: TS.">
    <original>I</original>
    <variation>L</variation>
    <location>
        <position position="98"/>
    </location>
</feature>
<feature type="sequence variant" description="In strain: TS.">
    <original>K</original>
    <variation>N</variation>
    <location>
        <position position="114"/>
    </location>
</feature>
<feature type="sequence variant" description="In strain: Oak Ridge.">
    <original>S</original>
    <variation>L</variation>
    <location>
        <position position="292"/>
    </location>
</feature>
<feature type="sequence variant" description="In strain: TS.">
    <original>F</original>
    <variation>L</variation>
    <location>
        <position position="317"/>
    </location>
</feature>
<feature type="sequence variant" description="In strain: TS.">
    <original>V</original>
    <variation>I</variation>
    <location>
        <position position="320"/>
    </location>
</feature>
<feature type="sequence variant" description="In strain: TS.">
    <original>SK</original>
    <variation>ND</variation>
    <location>
        <begin position="346"/>
        <end position="347"/>
    </location>
</feature>
<feature type="sequence variant" description="In strain: TS.">
    <original>D</original>
    <variation>T</variation>
    <location>
        <position position="351"/>
    </location>
</feature>
<feature type="sequence variant" description="In strain: TS.">
    <original>H</original>
    <variation>K</variation>
    <location>
        <position position="355"/>
    </location>
</feature>
<feature type="sequence variant" description="In strain: TS.">
    <original>Q</original>
    <variation>K</variation>
    <location>
        <position position="374"/>
    </location>
</feature>
<feature type="sequence variant" description="In strain: TS.">
    <original>V</original>
    <variation>P</variation>
    <location>
        <position position="379"/>
    </location>
</feature>
<feature type="sequence variant" description="In strain: TS.">
    <original>L</original>
    <variation>M</variation>
    <location>
        <position position="439"/>
    </location>
</feature>
<organism>
    <name type="scientific">Neurospora crassa (strain ATCC 24698 / 74-OR23-1A / CBS 708.71 / DSM 1257 / FGSC 987)</name>
    <dbReference type="NCBI Taxonomy" id="367110"/>
    <lineage>
        <taxon>Eukaryota</taxon>
        <taxon>Fungi</taxon>
        <taxon>Dikarya</taxon>
        <taxon>Ascomycota</taxon>
        <taxon>Pezizomycotina</taxon>
        <taxon>Sordariomycetes</taxon>
        <taxon>Sordariomycetidae</taxon>
        <taxon>Sordariales</taxon>
        <taxon>Sordariaceae</taxon>
        <taxon>Neurospora</taxon>
    </lineage>
</organism>
<proteinExistence type="evidence at protein level"/>
<accession>P06811</accession>
<accession>P10574</accession>
<accession>Q7RV60</accession>
<dbReference type="EC" id="1.10.3.2" evidence="2"/>
<dbReference type="EMBL" id="M18333">
    <property type="protein sequence ID" value="AAA33591.1"/>
    <property type="molecule type" value="Genomic_DNA"/>
</dbReference>
<dbReference type="EMBL" id="M18334">
    <property type="protein sequence ID" value="AAA33592.1"/>
    <property type="molecule type" value="Genomic_DNA"/>
</dbReference>
<dbReference type="EMBL" id="CM002242">
    <property type="protein sequence ID" value="EAA27703.1"/>
    <property type="molecule type" value="Genomic_DNA"/>
</dbReference>
<dbReference type="EMBL" id="M14554">
    <property type="protein sequence ID" value="AAA33590.1"/>
    <property type="molecule type" value="Genomic_DNA"/>
</dbReference>
<dbReference type="PIR" id="A28523">
    <property type="entry name" value="KSNCLO"/>
</dbReference>
<dbReference type="PIR" id="B28523">
    <property type="entry name" value="KSNCLT"/>
</dbReference>
<dbReference type="RefSeq" id="XP_956939.1">
    <property type="nucleotide sequence ID" value="XM_951846.3"/>
</dbReference>
<dbReference type="SMR" id="P06811"/>
<dbReference type="STRING" id="367110.P06811"/>
<dbReference type="CAZy" id="AA1">
    <property type="family name" value="Auxiliary Activities 1"/>
</dbReference>
<dbReference type="GlyCosmos" id="P06811">
    <property type="glycosylation" value="6 sites, No reported glycans"/>
</dbReference>
<dbReference type="PaxDb" id="5141-EFNCRP00000005387"/>
<dbReference type="EnsemblFungi" id="EAA27703">
    <property type="protein sequence ID" value="EAA27703"/>
    <property type="gene ID" value="NCU04528"/>
</dbReference>
<dbReference type="GeneID" id="3873077"/>
<dbReference type="KEGG" id="ncr:NCU04528"/>
<dbReference type="VEuPathDB" id="FungiDB:NCU04528"/>
<dbReference type="HOGENOM" id="CLU_006504_3_2_1"/>
<dbReference type="InParanoid" id="P06811"/>
<dbReference type="OMA" id="CHIIEHQ"/>
<dbReference type="OrthoDB" id="2121828at2759"/>
<dbReference type="Proteomes" id="UP000001805">
    <property type="component" value="Chromosome 7, Linkage Group VII"/>
</dbReference>
<dbReference type="GO" id="GO:0005576">
    <property type="term" value="C:extracellular region"/>
    <property type="evidence" value="ECO:0007669"/>
    <property type="project" value="UniProtKB-SubCell"/>
</dbReference>
<dbReference type="GO" id="GO:0005507">
    <property type="term" value="F:copper ion binding"/>
    <property type="evidence" value="ECO:0007669"/>
    <property type="project" value="InterPro"/>
</dbReference>
<dbReference type="GO" id="GO:0052716">
    <property type="term" value="F:hydroquinone:oxygen oxidoreductase activity"/>
    <property type="evidence" value="ECO:0007669"/>
    <property type="project" value="UniProtKB-EC"/>
</dbReference>
<dbReference type="GO" id="GO:0016491">
    <property type="term" value="F:oxidoreductase activity"/>
    <property type="evidence" value="ECO:0000318"/>
    <property type="project" value="GO_Central"/>
</dbReference>
<dbReference type="GO" id="GO:0046274">
    <property type="term" value="P:lignin catabolic process"/>
    <property type="evidence" value="ECO:0007669"/>
    <property type="project" value="UniProtKB-KW"/>
</dbReference>
<dbReference type="CDD" id="cd13854">
    <property type="entry name" value="CuRO_1_MaLCC_like"/>
    <property type="match status" value="1"/>
</dbReference>
<dbReference type="CDD" id="cd13880">
    <property type="entry name" value="CuRO_2_MaLCC_like"/>
    <property type="match status" value="1"/>
</dbReference>
<dbReference type="CDD" id="cd13901">
    <property type="entry name" value="CuRO_3_MaLCC_like"/>
    <property type="match status" value="1"/>
</dbReference>
<dbReference type="FunFam" id="2.60.40.420:FF:000021">
    <property type="entry name" value="Extracellular dihydrogeodin oxidase/laccase"/>
    <property type="match status" value="1"/>
</dbReference>
<dbReference type="FunFam" id="2.60.40.420:FF:000078">
    <property type="entry name" value="Laccase-1"/>
    <property type="match status" value="1"/>
</dbReference>
<dbReference type="FunFam" id="2.60.40.420:FF:000046">
    <property type="entry name" value="Multicopper oxidase"/>
    <property type="match status" value="1"/>
</dbReference>
<dbReference type="Gene3D" id="2.60.40.420">
    <property type="entry name" value="Cupredoxins - blue copper proteins"/>
    <property type="match status" value="3"/>
</dbReference>
<dbReference type="InterPro" id="IPR011707">
    <property type="entry name" value="Cu-oxidase-like_N"/>
</dbReference>
<dbReference type="InterPro" id="IPR001117">
    <property type="entry name" value="Cu-oxidase_2nd"/>
</dbReference>
<dbReference type="InterPro" id="IPR011706">
    <property type="entry name" value="Cu-oxidase_C"/>
</dbReference>
<dbReference type="InterPro" id="IPR045087">
    <property type="entry name" value="Cu-oxidase_fam"/>
</dbReference>
<dbReference type="InterPro" id="IPR033138">
    <property type="entry name" value="Cu_oxidase_CS"/>
</dbReference>
<dbReference type="InterPro" id="IPR002355">
    <property type="entry name" value="Cu_oxidase_Cu_BS"/>
</dbReference>
<dbReference type="InterPro" id="IPR008972">
    <property type="entry name" value="Cupredoxin"/>
</dbReference>
<dbReference type="PANTHER" id="PTHR11709:SF87">
    <property type="entry name" value="LACCASE"/>
    <property type="match status" value="1"/>
</dbReference>
<dbReference type="PANTHER" id="PTHR11709">
    <property type="entry name" value="MULTI-COPPER OXIDASE"/>
    <property type="match status" value="1"/>
</dbReference>
<dbReference type="Pfam" id="PF00394">
    <property type="entry name" value="Cu-oxidase"/>
    <property type="match status" value="1"/>
</dbReference>
<dbReference type="Pfam" id="PF07731">
    <property type="entry name" value="Cu-oxidase_2"/>
    <property type="match status" value="1"/>
</dbReference>
<dbReference type="Pfam" id="PF07732">
    <property type="entry name" value="Cu-oxidase_3"/>
    <property type="match status" value="1"/>
</dbReference>
<dbReference type="SUPFAM" id="SSF49503">
    <property type="entry name" value="Cupredoxins"/>
    <property type="match status" value="3"/>
</dbReference>
<dbReference type="PROSITE" id="PS00079">
    <property type="entry name" value="MULTICOPPER_OXIDASE1"/>
    <property type="match status" value="1"/>
</dbReference>
<dbReference type="PROSITE" id="PS00080">
    <property type="entry name" value="MULTICOPPER_OXIDASE2"/>
    <property type="match status" value="1"/>
</dbReference>
<comment type="function">
    <text evidence="2">Lignin degradation and detoxification of lignin-derived products.</text>
</comment>
<comment type="catalytic activity">
    <reaction evidence="2">
        <text>4 hydroquinone + O2 = 4 benzosemiquinone + 2 H2O</text>
        <dbReference type="Rhea" id="RHEA:11276"/>
        <dbReference type="ChEBI" id="CHEBI:15377"/>
        <dbReference type="ChEBI" id="CHEBI:15379"/>
        <dbReference type="ChEBI" id="CHEBI:17594"/>
        <dbReference type="ChEBI" id="CHEBI:17977"/>
        <dbReference type="EC" id="1.10.3.2"/>
    </reaction>
</comment>
<comment type="cofactor">
    <cofactor evidence="2">
        <name>Cu cation</name>
        <dbReference type="ChEBI" id="CHEBI:23378"/>
    </cofactor>
    <text evidence="2">Binds 4 Cu cations per monomer.</text>
</comment>
<comment type="subcellular location">
    <subcellularLocation>
        <location evidence="2">Secreted</location>
    </subcellularLocation>
</comment>
<comment type="similarity">
    <text evidence="4">Belongs to the multicopper oxidase family.</text>
</comment>